<organism>
    <name type="scientific">Thermotoga maritima (strain ATCC 43589 / DSM 3109 / JCM 10099 / NBRC 100826 / MSB8)</name>
    <dbReference type="NCBI Taxonomy" id="243274"/>
    <lineage>
        <taxon>Bacteria</taxon>
        <taxon>Thermotogati</taxon>
        <taxon>Thermotogota</taxon>
        <taxon>Thermotogae</taxon>
        <taxon>Thermotogales</taxon>
        <taxon>Thermotogaceae</taxon>
        <taxon>Thermotoga</taxon>
    </lineage>
</organism>
<comment type="function">
    <text evidence="1">Part of the ABC transporter complex PotABCD involved in spermidine/putrescine import. Responsible for energy coupling to the transport system.</text>
</comment>
<comment type="catalytic activity">
    <reaction evidence="1">
        <text>ATP + H2O + polyamine-[polyamine-binding protein]Side 1 = ADP + phosphate + polyamineSide 2 + [polyamine-binding protein]Side 1.</text>
        <dbReference type="EC" id="7.6.2.11"/>
    </reaction>
</comment>
<comment type="subunit">
    <text evidence="1">The complex is composed of two ATP-binding proteins (PotA), two transmembrane proteins (PotB and PotC) and a solute-binding protein (PotD).</text>
</comment>
<comment type="subcellular location">
    <subcellularLocation>
        <location evidence="1">Cell inner membrane</location>
        <topology evidence="1">Peripheral membrane protein</topology>
    </subcellularLocation>
</comment>
<comment type="similarity">
    <text evidence="1">Belongs to the ABC transporter superfamily. Spermidine/putrescine importer (TC 3.A.1.11.1) family.</text>
</comment>
<accession>Q9X196</accession>
<sequence length="368" mass="42046">MIGGEVSIKNVSKFFDDFQVLKNVSLDIKKGEFFSILGPSGCGKTTLLRVIAGFEGVESGDVLLDGKSILNLPPNKRPVNIIFQNYALFPHLTVFENIAFPLKLKKLSENEINQRVNELLSLIRMEEHAQKMPSQLSGGQKQRVAIARALANEPRVLLLDEPLSALDAKLRQELLVELDNLHDRVGITFIYVTHDQAEAISVSDRVALMNEGEIVQVGTPYEVYESPVNVFAATFIGETNLMKAEVVEVEDEYYVVESPGIGQFRCYRDKEAKKGDRLLITLRPEKIRISRKQFRSEETFNVFHGVVDEEIYMGHQTKYFVRLDEGYIMKVYKQHARYILDEPIIKWEDEVFITWNPDDSFIVEVLEE</sequence>
<protein>
    <recommendedName>
        <fullName evidence="1">Spermidine/putrescine import ATP-binding protein PotA</fullName>
        <ecNumber evidence="1">7.6.2.11</ecNumber>
    </recommendedName>
</protein>
<feature type="chain" id="PRO_0000286319" description="Spermidine/putrescine import ATP-binding protein PotA">
    <location>
        <begin position="1"/>
        <end position="368"/>
    </location>
</feature>
<feature type="domain" description="ABC transporter" evidence="1">
    <location>
        <begin position="6"/>
        <end position="236"/>
    </location>
</feature>
<feature type="binding site" evidence="1">
    <location>
        <begin position="38"/>
        <end position="45"/>
    </location>
    <ligand>
        <name>ATP</name>
        <dbReference type="ChEBI" id="CHEBI:30616"/>
    </ligand>
</feature>
<name>POTA_THEMA</name>
<keyword id="KW-0067">ATP-binding</keyword>
<keyword id="KW-0997">Cell inner membrane</keyword>
<keyword id="KW-1003">Cell membrane</keyword>
<keyword id="KW-0472">Membrane</keyword>
<keyword id="KW-0547">Nucleotide-binding</keyword>
<keyword id="KW-1185">Reference proteome</keyword>
<keyword id="KW-1278">Translocase</keyword>
<keyword id="KW-0813">Transport</keyword>
<gene>
    <name evidence="1" type="primary">potA</name>
    <name type="ordered locus">TM_1376</name>
</gene>
<reference key="1">
    <citation type="journal article" date="1999" name="Nature">
        <title>Evidence for lateral gene transfer between Archaea and Bacteria from genome sequence of Thermotoga maritima.</title>
        <authorList>
            <person name="Nelson K.E."/>
            <person name="Clayton R.A."/>
            <person name="Gill S.R."/>
            <person name="Gwinn M.L."/>
            <person name="Dodson R.J."/>
            <person name="Haft D.H."/>
            <person name="Hickey E.K."/>
            <person name="Peterson J.D."/>
            <person name="Nelson W.C."/>
            <person name="Ketchum K.A."/>
            <person name="McDonald L.A."/>
            <person name="Utterback T.R."/>
            <person name="Malek J.A."/>
            <person name="Linher K.D."/>
            <person name="Garrett M.M."/>
            <person name="Stewart A.M."/>
            <person name="Cotton M.D."/>
            <person name="Pratt M.S."/>
            <person name="Phillips C.A."/>
            <person name="Richardson D.L."/>
            <person name="Heidelberg J.F."/>
            <person name="Sutton G.G."/>
            <person name="Fleischmann R.D."/>
            <person name="Eisen J.A."/>
            <person name="White O."/>
            <person name="Salzberg S.L."/>
            <person name="Smith H.O."/>
            <person name="Venter J.C."/>
            <person name="Fraser C.M."/>
        </authorList>
    </citation>
    <scope>NUCLEOTIDE SEQUENCE [LARGE SCALE GENOMIC DNA]</scope>
    <source>
        <strain>ATCC 43589 / DSM 3109 / JCM 10099 / NBRC 100826 / MSB8</strain>
    </source>
</reference>
<evidence type="ECO:0000255" key="1">
    <source>
        <dbReference type="HAMAP-Rule" id="MF_01726"/>
    </source>
</evidence>
<dbReference type="EC" id="7.6.2.11" evidence="1"/>
<dbReference type="EMBL" id="AE000512">
    <property type="protein sequence ID" value="AAD36446.1"/>
    <property type="molecule type" value="Genomic_DNA"/>
</dbReference>
<dbReference type="PIR" id="A72261">
    <property type="entry name" value="A72261"/>
</dbReference>
<dbReference type="RefSeq" id="NP_229177.1">
    <property type="nucleotide sequence ID" value="NC_000853.1"/>
</dbReference>
<dbReference type="RefSeq" id="WP_004081574.1">
    <property type="nucleotide sequence ID" value="NZ_CP011107.1"/>
</dbReference>
<dbReference type="SMR" id="Q9X196"/>
<dbReference type="STRING" id="243274.TM_1376"/>
<dbReference type="PaxDb" id="243274-THEMA_07445"/>
<dbReference type="EnsemblBacteria" id="AAD36446">
    <property type="protein sequence ID" value="AAD36446"/>
    <property type="gene ID" value="TM_1376"/>
</dbReference>
<dbReference type="KEGG" id="tma:TM1376"/>
<dbReference type="KEGG" id="tmi:THEMA_07445"/>
<dbReference type="KEGG" id="tmm:Tmari_1383"/>
<dbReference type="KEGG" id="tmw:THMA_1403"/>
<dbReference type="eggNOG" id="COG3842">
    <property type="taxonomic scope" value="Bacteria"/>
</dbReference>
<dbReference type="InParanoid" id="Q9X196"/>
<dbReference type="OrthoDB" id="9802264at2"/>
<dbReference type="Proteomes" id="UP000008183">
    <property type="component" value="Chromosome"/>
</dbReference>
<dbReference type="GO" id="GO:0043190">
    <property type="term" value="C:ATP-binding cassette (ABC) transporter complex"/>
    <property type="evidence" value="ECO:0007669"/>
    <property type="project" value="InterPro"/>
</dbReference>
<dbReference type="GO" id="GO:0015594">
    <property type="term" value="F:ABC-type putrescine transporter activity"/>
    <property type="evidence" value="ECO:0007669"/>
    <property type="project" value="InterPro"/>
</dbReference>
<dbReference type="GO" id="GO:0005524">
    <property type="term" value="F:ATP binding"/>
    <property type="evidence" value="ECO:0007669"/>
    <property type="project" value="UniProtKB-KW"/>
</dbReference>
<dbReference type="GO" id="GO:0016887">
    <property type="term" value="F:ATP hydrolysis activity"/>
    <property type="evidence" value="ECO:0007669"/>
    <property type="project" value="InterPro"/>
</dbReference>
<dbReference type="CDD" id="cd03300">
    <property type="entry name" value="ABC_PotA_N"/>
    <property type="match status" value="1"/>
</dbReference>
<dbReference type="FunFam" id="3.40.50.300:FF:000133">
    <property type="entry name" value="Spermidine/putrescine import ATP-binding protein PotA"/>
    <property type="match status" value="1"/>
</dbReference>
<dbReference type="Gene3D" id="2.40.50.100">
    <property type="match status" value="1"/>
</dbReference>
<dbReference type="Gene3D" id="3.40.50.300">
    <property type="entry name" value="P-loop containing nucleotide triphosphate hydrolases"/>
    <property type="match status" value="1"/>
</dbReference>
<dbReference type="InterPro" id="IPR003593">
    <property type="entry name" value="AAA+_ATPase"/>
</dbReference>
<dbReference type="InterPro" id="IPR050093">
    <property type="entry name" value="ABC_SmlMolc_Importer"/>
</dbReference>
<dbReference type="InterPro" id="IPR003439">
    <property type="entry name" value="ABC_transporter-like_ATP-bd"/>
</dbReference>
<dbReference type="InterPro" id="IPR017871">
    <property type="entry name" value="ABC_transporter-like_CS"/>
</dbReference>
<dbReference type="InterPro" id="IPR008995">
    <property type="entry name" value="Mo/tungstate-bd_C_term_dom"/>
</dbReference>
<dbReference type="InterPro" id="IPR027417">
    <property type="entry name" value="P-loop_NTPase"/>
</dbReference>
<dbReference type="InterPro" id="IPR005893">
    <property type="entry name" value="PotA-like"/>
</dbReference>
<dbReference type="InterPro" id="IPR017879">
    <property type="entry name" value="PotA_ATP-bd"/>
</dbReference>
<dbReference type="InterPro" id="IPR013611">
    <property type="entry name" value="Transp-assoc_OB_typ2"/>
</dbReference>
<dbReference type="NCBIfam" id="TIGR01187">
    <property type="entry name" value="potA"/>
    <property type="match status" value="1"/>
</dbReference>
<dbReference type="PANTHER" id="PTHR42781">
    <property type="entry name" value="SPERMIDINE/PUTRESCINE IMPORT ATP-BINDING PROTEIN POTA"/>
    <property type="match status" value="1"/>
</dbReference>
<dbReference type="PANTHER" id="PTHR42781:SF4">
    <property type="entry name" value="SPERMIDINE_PUTRESCINE IMPORT ATP-BINDING PROTEIN POTA"/>
    <property type="match status" value="1"/>
</dbReference>
<dbReference type="Pfam" id="PF00005">
    <property type="entry name" value="ABC_tran"/>
    <property type="match status" value="1"/>
</dbReference>
<dbReference type="Pfam" id="PF08402">
    <property type="entry name" value="TOBE_2"/>
    <property type="match status" value="1"/>
</dbReference>
<dbReference type="SMART" id="SM00382">
    <property type="entry name" value="AAA"/>
    <property type="match status" value="1"/>
</dbReference>
<dbReference type="SUPFAM" id="SSF50331">
    <property type="entry name" value="MOP-like"/>
    <property type="match status" value="1"/>
</dbReference>
<dbReference type="SUPFAM" id="SSF52540">
    <property type="entry name" value="P-loop containing nucleoside triphosphate hydrolases"/>
    <property type="match status" value="1"/>
</dbReference>
<dbReference type="PROSITE" id="PS00211">
    <property type="entry name" value="ABC_TRANSPORTER_1"/>
    <property type="match status" value="1"/>
</dbReference>
<dbReference type="PROSITE" id="PS50893">
    <property type="entry name" value="ABC_TRANSPORTER_2"/>
    <property type="match status" value="1"/>
</dbReference>
<dbReference type="PROSITE" id="PS51305">
    <property type="entry name" value="POTA"/>
    <property type="match status" value="1"/>
</dbReference>
<proteinExistence type="inferred from homology"/>